<name>LYSY_PYRNV</name>
<organism>
    <name type="scientific">Pyrobaculum neutrophilum (strain DSM 2338 / JCM 9278 / NBRC 100436 / V24Sta)</name>
    <name type="common">Thermoproteus neutrophilus</name>
    <dbReference type="NCBI Taxonomy" id="444157"/>
    <lineage>
        <taxon>Archaea</taxon>
        <taxon>Thermoproteota</taxon>
        <taxon>Thermoprotei</taxon>
        <taxon>Thermoproteales</taxon>
        <taxon>Thermoproteaceae</taxon>
        <taxon>Pyrobaculum</taxon>
    </lineage>
</organism>
<gene>
    <name evidence="1" type="primary">lysY</name>
    <name type="ordered locus">Tneu_1837</name>
</gene>
<sequence length="352" mass="38984">MKKVCIIGASGFTGGELLRLLLSHSGVEVVCATSRKFKGEFVYRVHPNLRGFTQLKFVEPTIDAALKADVVFLALPHGESVKWVPKLYESGVAVFDLSADFRLKDPNAYVEWYKWPQPHPYPDLLQKAVYGQPELHRDELVGAKLVAVPGCMATASILMLAPLAKYGQLGEVPPVVDAKIGSSGAGAEGSIVDLHSYRTYVVRPYEPVHHRHIAEIEQELSRLAGRRVRVAFTPHAVDIVRGIFTTGHVYLDKLPAEADMWKYYRSMYGDSKFIRIVKDRLGISRYPNVKYVLGSNVVDVGFELDPRLNRVVTFAAIDNLVRGASGQAVQAFNVAMGFPEDEGLRQIPVAPI</sequence>
<dbReference type="EC" id="1.2.1.103" evidence="1"/>
<dbReference type="EC" id="1.2.1.106" evidence="1"/>
<dbReference type="EMBL" id="CP001014">
    <property type="protein sequence ID" value="ACB40754.1"/>
    <property type="molecule type" value="Genomic_DNA"/>
</dbReference>
<dbReference type="RefSeq" id="WP_012351173.1">
    <property type="nucleotide sequence ID" value="NC_010525.1"/>
</dbReference>
<dbReference type="SMR" id="B1YB54"/>
<dbReference type="STRING" id="444157.Tneu_1837"/>
<dbReference type="GeneID" id="6164731"/>
<dbReference type="KEGG" id="tne:Tneu_1837"/>
<dbReference type="eggNOG" id="arCOG00495">
    <property type="taxonomic scope" value="Archaea"/>
</dbReference>
<dbReference type="HOGENOM" id="CLU_006384_0_1_2"/>
<dbReference type="OrthoDB" id="372053at2157"/>
<dbReference type="UniPathway" id="UPA00033">
    <property type="reaction ID" value="UER00037"/>
</dbReference>
<dbReference type="UniPathway" id="UPA00068"/>
<dbReference type="Proteomes" id="UP000001694">
    <property type="component" value="Chromosome"/>
</dbReference>
<dbReference type="GO" id="GO:0005737">
    <property type="term" value="C:cytoplasm"/>
    <property type="evidence" value="ECO:0007669"/>
    <property type="project" value="UniProtKB-SubCell"/>
</dbReference>
<dbReference type="GO" id="GO:0043870">
    <property type="term" value="F:N-acetyl-gamma-aminoadipyl-phosphate reductase activity"/>
    <property type="evidence" value="ECO:0007669"/>
    <property type="project" value="RHEA"/>
</dbReference>
<dbReference type="GO" id="GO:0003942">
    <property type="term" value="F:N-acetyl-gamma-glutamyl-phosphate reductase activity"/>
    <property type="evidence" value="ECO:0007669"/>
    <property type="project" value="InterPro"/>
</dbReference>
<dbReference type="GO" id="GO:0051287">
    <property type="term" value="F:NAD binding"/>
    <property type="evidence" value="ECO:0007669"/>
    <property type="project" value="InterPro"/>
</dbReference>
<dbReference type="GO" id="GO:0070401">
    <property type="term" value="F:NADP+ binding"/>
    <property type="evidence" value="ECO:0007669"/>
    <property type="project" value="InterPro"/>
</dbReference>
<dbReference type="GO" id="GO:0042450">
    <property type="term" value="P:arginine biosynthetic process via ornithine"/>
    <property type="evidence" value="ECO:0007669"/>
    <property type="project" value="UniProtKB-UniRule"/>
</dbReference>
<dbReference type="GO" id="GO:0006526">
    <property type="term" value="P:L-arginine biosynthetic process"/>
    <property type="evidence" value="ECO:0007669"/>
    <property type="project" value="UniProtKB-UniPathway"/>
</dbReference>
<dbReference type="GO" id="GO:0019878">
    <property type="term" value="P:lysine biosynthetic process via aminoadipic acid"/>
    <property type="evidence" value="ECO:0007669"/>
    <property type="project" value="UniProtKB-UniRule"/>
</dbReference>
<dbReference type="CDD" id="cd23939">
    <property type="entry name" value="AGPR_1_C_LysY"/>
    <property type="match status" value="1"/>
</dbReference>
<dbReference type="CDD" id="cd17895">
    <property type="entry name" value="AGPR_1_N"/>
    <property type="match status" value="1"/>
</dbReference>
<dbReference type="Gene3D" id="3.30.360.10">
    <property type="entry name" value="Dihydrodipicolinate Reductase, domain 2"/>
    <property type="match status" value="1"/>
</dbReference>
<dbReference type="Gene3D" id="3.40.50.720">
    <property type="entry name" value="NAD(P)-binding Rossmann-like Domain"/>
    <property type="match status" value="1"/>
</dbReference>
<dbReference type="HAMAP" id="MF_00150">
    <property type="entry name" value="ArgC_type1"/>
    <property type="match status" value="1"/>
</dbReference>
<dbReference type="HAMAP" id="MF_02083">
    <property type="entry name" value="LysY"/>
    <property type="match status" value="1"/>
</dbReference>
<dbReference type="InterPro" id="IPR000706">
    <property type="entry name" value="AGPR_type-1"/>
</dbReference>
<dbReference type="InterPro" id="IPR037535">
    <property type="entry name" value="LysY"/>
</dbReference>
<dbReference type="InterPro" id="IPR036291">
    <property type="entry name" value="NAD(P)-bd_dom_sf"/>
</dbReference>
<dbReference type="InterPro" id="IPR050085">
    <property type="entry name" value="NAGSA_dehydrogenase"/>
</dbReference>
<dbReference type="InterPro" id="IPR000534">
    <property type="entry name" value="Semialdehyde_DH_NAD-bd"/>
</dbReference>
<dbReference type="NCBIfam" id="TIGR01850">
    <property type="entry name" value="argC"/>
    <property type="match status" value="1"/>
</dbReference>
<dbReference type="PANTHER" id="PTHR32338:SF11">
    <property type="entry name" value="[LYSW]-L-2-AMINOADIPATE_[LYSW]-L-GLUTAMATE PHOSPHATE REDUCTASE-RELATED"/>
    <property type="match status" value="1"/>
</dbReference>
<dbReference type="PANTHER" id="PTHR32338">
    <property type="entry name" value="N-ACETYL-GAMMA-GLUTAMYL-PHOSPHATE REDUCTASE, CHLOROPLASTIC-RELATED-RELATED"/>
    <property type="match status" value="1"/>
</dbReference>
<dbReference type="Pfam" id="PF01118">
    <property type="entry name" value="Semialdhyde_dh"/>
    <property type="match status" value="1"/>
</dbReference>
<dbReference type="Pfam" id="PF22698">
    <property type="entry name" value="Semialdhyde_dhC_1"/>
    <property type="match status" value="1"/>
</dbReference>
<dbReference type="SMART" id="SM00859">
    <property type="entry name" value="Semialdhyde_dh"/>
    <property type="match status" value="1"/>
</dbReference>
<dbReference type="SUPFAM" id="SSF55347">
    <property type="entry name" value="Glyceraldehyde-3-phosphate dehydrogenase-like, C-terminal domain"/>
    <property type="match status" value="1"/>
</dbReference>
<dbReference type="SUPFAM" id="SSF51735">
    <property type="entry name" value="NAD(P)-binding Rossmann-fold domains"/>
    <property type="match status" value="1"/>
</dbReference>
<keyword id="KW-0028">Amino-acid biosynthesis</keyword>
<keyword id="KW-0055">Arginine biosynthesis</keyword>
<keyword id="KW-0963">Cytoplasm</keyword>
<keyword id="KW-0457">Lysine biosynthesis</keyword>
<keyword id="KW-0521">NADP</keyword>
<keyword id="KW-0560">Oxidoreductase</keyword>
<protein>
    <recommendedName>
        <fullName evidence="1">Putative [LysW]-L-2-aminoadipate/[LysW]-L-glutamate phosphate reductase</fullName>
        <ecNumber evidence="1">1.2.1.103</ecNumber>
        <ecNumber evidence="1">1.2.1.106</ecNumber>
    </recommendedName>
</protein>
<comment type="function">
    <text evidence="1">Involved in both the arginine and lysine biosynthetic pathways.</text>
</comment>
<comment type="catalytic activity">
    <reaction evidence="1">
        <text>[amino-group carrier protein]-C-terminal-N-(1-carboxy-5-oxopentan-1-yl)-L-glutamine + phosphate + NADP(+) = [amino-group carrier protein]-C-terminal-N-(1-carboxy-5-phosphooxy-5-oxopentan-1-yl)-L-glutamine + NADPH + H(+)</text>
        <dbReference type="Rhea" id="RHEA:41948"/>
        <dbReference type="Rhea" id="RHEA-COMP:9712"/>
        <dbReference type="Rhea" id="RHEA-COMP:9714"/>
        <dbReference type="ChEBI" id="CHEBI:15378"/>
        <dbReference type="ChEBI" id="CHEBI:43474"/>
        <dbReference type="ChEBI" id="CHEBI:57783"/>
        <dbReference type="ChEBI" id="CHEBI:58349"/>
        <dbReference type="ChEBI" id="CHEBI:78499"/>
        <dbReference type="ChEBI" id="CHEBI:78501"/>
        <dbReference type="EC" id="1.2.1.103"/>
    </reaction>
</comment>
<comment type="catalytic activity">
    <reaction evidence="1">
        <text>[amino-group carrier protein]-C-terminal-gamma-(L-glutamyl-5-semialdehyde)-L-glutamate + phosphate + NADP(+) = [amino-group carrier protein]-C-terminal-gamma-(5-phospho-L-glutamyl)-L-glutamate + NADPH + H(+)</text>
        <dbReference type="Rhea" id="RHEA:52668"/>
        <dbReference type="Rhea" id="RHEA-COMP:13313"/>
        <dbReference type="Rhea" id="RHEA-COMP:13327"/>
        <dbReference type="ChEBI" id="CHEBI:15378"/>
        <dbReference type="ChEBI" id="CHEBI:43474"/>
        <dbReference type="ChEBI" id="CHEBI:57783"/>
        <dbReference type="ChEBI" id="CHEBI:58349"/>
        <dbReference type="ChEBI" id="CHEBI:136717"/>
        <dbReference type="ChEBI" id="CHEBI:136761"/>
        <dbReference type="EC" id="1.2.1.106"/>
    </reaction>
</comment>
<comment type="pathway">
    <text evidence="1">Amino-acid biosynthesis; L-lysine biosynthesis via AAA pathway; L-lysine from L-alpha-aminoadipate (Thermus route): step 3/5.</text>
</comment>
<comment type="pathway">
    <text evidence="1">Amino-acid biosynthesis; L-arginine biosynthesis.</text>
</comment>
<comment type="subcellular location">
    <subcellularLocation>
        <location evidence="1">Cytoplasm</location>
    </subcellularLocation>
</comment>
<comment type="similarity">
    <text evidence="1">Belongs to the NAGSA dehydrogenase family. Type 1 subfamily. LysY sub-subfamily.</text>
</comment>
<accession>B1YB54</accession>
<feature type="chain" id="PRO_1000096742" description="Putative [LysW]-L-2-aminoadipate/[LysW]-L-glutamate phosphate reductase">
    <location>
        <begin position="1"/>
        <end position="352"/>
    </location>
</feature>
<feature type="active site" evidence="1">
    <location>
        <position position="151"/>
    </location>
</feature>
<feature type="binding site" evidence="1">
    <location>
        <begin position="10"/>
        <end position="13"/>
    </location>
    <ligand>
        <name>NADP(+)</name>
        <dbReference type="ChEBI" id="CHEBI:58349"/>
    </ligand>
</feature>
<feature type="binding site" evidence="1">
    <location>
        <begin position="34"/>
        <end position="36"/>
    </location>
    <ligand>
        <name>NADP(+)</name>
        <dbReference type="ChEBI" id="CHEBI:58349"/>
    </ligand>
</feature>
<feature type="binding site" evidence="1">
    <location>
        <position position="319"/>
    </location>
    <ligand>
        <name>NADP(+)</name>
        <dbReference type="ChEBI" id="CHEBI:58349"/>
    </ligand>
</feature>
<evidence type="ECO:0000255" key="1">
    <source>
        <dbReference type="HAMAP-Rule" id="MF_02083"/>
    </source>
</evidence>
<reference key="1">
    <citation type="submission" date="2008-03" db="EMBL/GenBank/DDBJ databases">
        <title>Complete sequence of Thermoproteus neutrophilus V24Sta.</title>
        <authorList>
            <consortium name="US DOE Joint Genome Institute"/>
            <person name="Copeland A."/>
            <person name="Lucas S."/>
            <person name="Lapidus A."/>
            <person name="Glavina del Rio T."/>
            <person name="Dalin E."/>
            <person name="Tice H."/>
            <person name="Bruce D."/>
            <person name="Goodwin L."/>
            <person name="Pitluck S."/>
            <person name="Sims D."/>
            <person name="Brettin T."/>
            <person name="Detter J.C."/>
            <person name="Han C."/>
            <person name="Kuske C.R."/>
            <person name="Schmutz J."/>
            <person name="Larimer F."/>
            <person name="Land M."/>
            <person name="Hauser L."/>
            <person name="Kyrpides N."/>
            <person name="Mikhailova N."/>
            <person name="Biddle J.F."/>
            <person name="Zhang Z."/>
            <person name="Fitz-Gibbon S.T."/>
            <person name="Lowe T.M."/>
            <person name="Saltikov C."/>
            <person name="House C.H."/>
            <person name="Richardson P."/>
        </authorList>
    </citation>
    <scope>NUCLEOTIDE SEQUENCE [LARGE SCALE GENOMIC DNA]</scope>
    <source>
        <strain>DSM 2338 / JCM 9278 / NBRC 100436 / V24Sta</strain>
    </source>
</reference>
<proteinExistence type="inferred from homology"/>